<sequence>MNTSIKNWPEQERPRERLLQQGPQSLSDSELLAIFLRSGSRQHSAVELARLLIQQFGSLNAVFDASYNELAQFNGIGATKYSQLLAVKELGRRYLDYHFSQTELSLHSSHLVLDYLRYELKGEKQEVFAVLCLDAELRKLHFKKLFFGSVQHCAVSVNQTLRYALQQHACQLVIAHNHPFGSPQPSPEDIKLTQQLEQACQLVEIRLLDHFIISPEGSFSFAEQQLLNPTSIAVQ</sequence>
<reference key="1">
    <citation type="journal article" date="2008" name="J. Bacteriol.">
        <title>Comparative genome sequence analysis of multidrug-resistant Acinetobacter baumannii.</title>
        <authorList>
            <person name="Adams M.D."/>
            <person name="Goglin K."/>
            <person name="Molyneaux N."/>
            <person name="Hujer K.M."/>
            <person name="Lavender H."/>
            <person name="Jamison J.J."/>
            <person name="MacDonald I.J."/>
            <person name="Martin K.M."/>
            <person name="Russo T."/>
            <person name="Campagnari A.A."/>
            <person name="Hujer A.M."/>
            <person name="Bonomo R.A."/>
            <person name="Gill S.R."/>
        </authorList>
    </citation>
    <scope>NUCLEOTIDE SEQUENCE [LARGE SCALE GENOMIC DNA]</scope>
    <source>
        <strain>AB307-0294</strain>
    </source>
</reference>
<protein>
    <recommendedName>
        <fullName>UPF0758 protein ABBFA_000545</fullName>
    </recommendedName>
</protein>
<keyword id="KW-0378">Hydrolase</keyword>
<keyword id="KW-0479">Metal-binding</keyword>
<keyword id="KW-0482">Metalloprotease</keyword>
<keyword id="KW-0645">Protease</keyword>
<keyword id="KW-0862">Zinc</keyword>
<accession>B7GWK9</accession>
<gene>
    <name type="ordered locus">ABBFA_000545</name>
</gene>
<dbReference type="EMBL" id="CP001172">
    <property type="protein sequence ID" value="ACJ58212.1"/>
    <property type="molecule type" value="Genomic_DNA"/>
</dbReference>
<dbReference type="SMR" id="B7GWK9"/>
<dbReference type="HOGENOM" id="CLU_073529_0_2_6"/>
<dbReference type="Proteomes" id="UP000006924">
    <property type="component" value="Chromosome"/>
</dbReference>
<dbReference type="GO" id="GO:0046872">
    <property type="term" value="F:metal ion binding"/>
    <property type="evidence" value="ECO:0007669"/>
    <property type="project" value="UniProtKB-KW"/>
</dbReference>
<dbReference type="GO" id="GO:0008237">
    <property type="term" value="F:metallopeptidase activity"/>
    <property type="evidence" value="ECO:0007669"/>
    <property type="project" value="UniProtKB-KW"/>
</dbReference>
<dbReference type="GO" id="GO:0006508">
    <property type="term" value="P:proteolysis"/>
    <property type="evidence" value="ECO:0007669"/>
    <property type="project" value="UniProtKB-KW"/>
</dbReference>
<dbReference type="CDD" id="cd08071">
    <property type="entry name" value="MPN_DUF2466"/>
    <property type="match status" value="1"/>
</dbReference>
<dbReference type="Gene3D" id="1.10.150.20">
    <property type="entry name" value="5' to 3' exonuclease, C-terminal subdomain"/>
    <property type="match status" value="1"/>
</dbReference>
<dbReference type="Gene3D" id="3.40.140.10">
    <property type="entry name" value="Cytidine Deaminase, domain 2"/>
    <property type="match status" value="1"/>
</dbReference>
<dbReference type="InterPro" id="IPR037518">
    <property type="entry name" value="MPN"/>
</dbReference>
<dbReference type="InterPro" id="IPR025657">
    <property type="entry name" value="RadC_JAB"/>
</dbReference>
<dbReference type="InterPro" id="IPR010994">
    <property type="entry name" value="RuvA_2-like"/>
</dbReference>
<dbReference type="InterPro" id="IPR001405">
    <property type="entry name" value="UPF0758"/>
</dbReference>
<dbReference type="InterPro" id="IPR046778">
    <property type="entry name" value="UPF0758_N"/>
</dbReference>
<dbReference type="NCBIfam" id="NF000642">
    <property type="entry name" value="PRK00024.1"/>
    <property type="match status" value="1"/>
</dbReference>
<dbReference type="NCBIfam" id="TIGR00608">
    <property type="entry name" value="radc"/>
    <property type="match status" value="1"/>
</dbReference>
<dbReference type="PANTHER" id="PTHR30471">
    <property type="entry name" value="DNA REPAIR PROTEIN RADC"/>
    <property type="match status" value="1"/>
</dbReference>
<dbReference type="PANTHER" id="PTHR30471:SF3">
    <property type="entry name" value="UPF0758 PROTEIN YEES-RELATED"/>
    <property type="match status" value="1"/>
</dbReference>
<dbReference type="Pfam" id="PF04002">
    <property type="entry name" value="RadC"/>
    <property type="match status" value="1"/>
</dbReference>
<dbReference type="Pfam" id="PF20582">
    <property type="entry name" value="UPF0758_N"/>
    <property type="match status" value="1"/>
</dbReference>
<dbReference type="SUPFAM" id="SSF102712">
    <property type="entry name" value="JAB1/MPN domain"/>
    <property type="match status" value="1"/>
</dbReference>
<dbReference type="SUPFAM" id="SSF47781">
    <property type="entry name" value="RuvA domain 2-like"/>
    <property type="match status" value="1"/>
</dbReference>
<dbReference type="PROSITE" id="PS50249">
    <property type="entry name" value="MPN"/>
    <property type="match status" value="1"/>
</dbReference>
<evidence type="ECO:0000255" key="1">
    <source>
        <dbReference type="PROSITE-ProRule" id="PRU01182"/>
    </source>
</evidence>
<evidence type="ECO:0000256" key="2">
    <source>
        <dbReference type="SAM" id="MobiDB-lite"/>
    </source>
</evidence>
<evidence type="ECO:0000305" key="3"/>
<feature type="chain" id="PRO_1000195281" description="UPF0758 protein ABBFA_000545">
    <location>
        <begin position="1"/>
        <end position="235"/>
    </location>
</feature>
<feature type="domain" description="MPN" evidence="1">
    <location>
        <begin position="105"/>
        <end position="227"/>
    </location>
</feature>
<feature type="region of interest" description="Disordered" evidence="2">
    <location>
        <begin position="1"/>
        <end position="20"/>
    </location>
</feature>
<feature type="short sequence motif" description="JAMM motif" evidence="1">
    <location>
        <begin position="176"/>
        <end position="189"/>
    </location>
</feature>
<feature type="compositionally biased region" description="Basic and acidic residues" evidence="2">
    <location>
        <begin position="9"/>
        <end position="18"/>
    </location>
</feature>
<feature type="binding site" evidence="1">
    <location>
        <position position="176"/>
    </location>
    <ligand>
        <name>Zn(2+)</name>
        <dbReference type="ChEBI" id="CHEBI:29105"/>
        <note>catalytic</note>
    </ligand>
</feature>
<feature type="binding site" evidence="1">
    <location>
        <position position="178"/>
    </location>
    <ligand>
        <name>Zn(2+)</name>
        <dbReference type="ChEBI" id="CHEBI:29105"/>
        <note>catalytic</note>
    </ligand>
</feature>
<feature type="binding site" evidence="1">
    <location>
        <position position="189"/>
    </location>
    <ligand>
        <name>Zn(2+)</name>
        <dbReference type="ChEBI" id="CHEBI:29105"/>
        <note>catalytic</note>
    </ligand>
</feature>
<organism>
    <name type="scientific">Acinetobacter baumannii (strain AB307-0294)</name>
    <dbReference type="NCBI Taxonomy" id="557600"/>
    <lineage>
        <taxon>Bacteria</taxon>
        <taxon>Pseudomonadati</taxon>
        <taxon>Pseudomonadota</taxon>
        <taxon>Gammaproteobacteria</taxon>
        <taxon>Moraxellales</taxon>
        <taxon>Moraxellaceae</taxon>
        <taxon>Acinetobacter</taxon>
        <taxon>Acinetobacter calcoaceticus/baumannii complex</taxon>
    </lineage>
</organism>
<comment type="similarity">
    <text evidence="3">Belongs to the UPF0758 family.</text>
</comment>
<name>Y545_ACIB3</name>
<proteinExistence type="inferred from homology"/>